<proteinExistence type="inferred from homology"/>
<keyword id="KW-0150">Chloroplast</keyword>
<keyword id="KW-0472">Membrane</keyword>
<keyword id="KW-0602">Photosynthesis</keyword>
<keyword id="KW-0604">Photosystem II</keyword>
<keyword id="KW-0934">Plastid</keyword>
<keyword id="KW-0674">Reaction center</keyword>
<keyword id="KW-0793">Thylakoid</keyword>
<keyword id="KW-0812">Transmembrane</keyword>
<keyword id="KW-1133">Transmembrane helix</keyword>
<evidence type="ECO:0000255" key="1">
    <source>
        <dbReference type="HAMAP-Rule" id="MF_00441"/>
    </source>
</evidence>
<reference key="1">
    <citation type="journal article" date="1986" name="Nature">
        <title>Chloroplast gene organization deduced from complete sequence of liverwort Marchantia polymorpha chloroplast DNA.</title>
        <authorList>
            <person name="Ohyama K."/>
            <person name="Fukuzawa H."/>
            <person name="Kohchi T."/>
            <person name="Shirai H."/>
            <person name="Sano T."/>
            <person name="Sano S."/>
            <person name="Umesono K."/>
            <person name="Shiki Y."/>
            <person name="Takeuchi M."/>
            <person name="Chang Z."/>
            <person name="Aota S."/>
            <person name="Inokuchi H."/>
            <person name="Ozeki H."/>
        </authorList>
    </citation>
    <scope>NUCLEOTIDE SEQUENCE [LARGE SCALE GENOMIC DNA]</scope>
</reference>
<reference key="2">
    <citation type="journal article" date="1988" name="J. Mol. Biol.">
        <title>Structure and organization of Marchantia polymorpha chloroplast genome. II. Gene organization of the large single copy region from rps'12 to atpB.</title>
        <authorList>
            <person name="Umesono K."/>
            <person name="Inokuchi H."/>
            <person name="Shiki Y."/>
            <person name="Takeuchi M."/>
            <person name="Chang Z."/>
            <person name="Fukuzawa H."/>
            <person name="Kohchi T."/>
            <person name="Shirai H."/>
            <person name="Ohyama K."/>
            <person name="Ozeki H."/>
        </authorList>
    </citation>
    <scope>NUCLEOTIDE SEQUENCE [GENOMIC DNA]</scope>
</reference>
<accession>P10348</accession>
<gene>
    <name evidence="1" type="primary">psbK</name>
</gene>
<protein>
    <recommendedName>
        <fullName evidence="1">Photosystem II reaction center protein K</fullName>
        <shortName evidence="1">PSII-K</shortName>
    </recommendedName>
</protein>
<feature type="propeptide" id="PRO_0000029487" evidence="1">
    <location>
        <begin position="1"/>
        <end position="18"/>
    </location>
</feature>
<feature type="chain" id="PRO_0000029488" description="Photosystem II reaction center protein K" evidence="1">
    <location>
        <begin position="19"/>
        <end position="55"/>
    </location>
</feature>
<feature type="transmembrane region" description="Helical" evidence="1">
    <location>
        <begin position="26"/>
        <end position="46"/>
    </location>
</feature>
<organism>
    <name type="scientific">Marchantia polymorpha</name>
    <name type="common">Common liverwort</name>
    <name type="synonym">Marchantia aquatica</name>
    <dbReference type="NCBI Taxonomy" id="3197"/>
    <lineage>
        <taxon>Eukaryota</taxon>
        <taxon>Viridiplantae</taxon>
        <taxon>Streptophyta</taxon>
        <taxon>Embryophyta</taxon>
        <taxon>Marchantiophyta</taxon>
        <taxon>Marchantiopsida</taxon>
        <taxon>Marchantiidae</taxon>
        <taxon>Marchantiales</taxon>
        <taxon>Marchantiaceae</taxon>
        <taxon>Marchantia</taxon>
    </lineage>
</organism>
<comment type="function">
    <text evidence="1">One of the components of the core complex of photosystem II (PSII). PSII is a light-driven water:plastoquinone oxidoreductase that uses light energy to abstract electrons from H(2)O, generating O(2) and a proton gradient subsequently used for ATP formation. It consists of a core antenna complex that captures photons, and an electron transfer chain that converts photonic excitation into a charge separation.</text>
</comment>
<comment type="subunit">
    <text evidence="1">PSII is composed of 1 copy each of membrane proteins PsbA, PsbB, PsbC, PsbD, PsbE, PsbF, PsbH, PsbI, PsbJ, PsbK, PsbL, PsbM, PsbT, PsbX, PsbY, PsbZ, Psb30/Ycf12, at least 3 peripheral proteins of the oxygen-evolving complex and a large number of cofactors. It forms dimeric complexes.</text>
</comment>
<comment type="subcellular location">
    <subcellularLocation>
        <location evidence="1">Plastid</location>
        <location evidence="1">Chloroplast thylakoid membrane</location>
        <topology evidence="1">Single-pass membrane protein</topology>
    </subcellularLocation>
</comment>
<comment type="similarity">
    <text evidence="1">Belongs to the PsbK family.</text>
</comment>
<sequence length="55" mass="6442">MFNIYLENAFYLNGITFAKLPEAYSIFDPIVDVMPIIPLFFFLLAFVWQASVSFR</sequence>
<dbReference type="EMBL" id="X04465">
    <property type="protein sequence ID" value="CAA28073.1"/>
    <property type="molecule type" value="Genomic_DNA"/>
</dbReference>
<dbReference type="PIR" id="A05024">
    <property type="entry name" value="A05024"/>
</dbReference>
<dbReference type="RefSeq" id="NP_039287.1">
    <property type="nucleotide sequence ID" value="NC_001319.1"/>
</dbReference>
<dbReference type="RefSeq" id="YP_009646804.1">
    <property type="nucleotide sequence ID" value="NC_042505.1"/>
</dbReference>
<dbReference type="SMR" id="P10348"/>
<dbReference type="GeneID" id="2702590"/>
<dbReference type="GeneID" id="40386750"/>
<dbReference type="GO" id="GO:0009535">
    <property type="term" value="C:chloroplast thylakoid membrane"/>
    <property type="evidence" value="ECO:0007669"/>
    <property type="project" value="UniProtKB-SubCell"/>
</dbReference>
<dbReference type="GO" id="GO:0009539">
    <property type="term" value="C:photosystem II reaction center"/>
    <property type="evidence" value="ECO:0007669"/>
    <property type="project" value="InterPro"/>
</dbReference>
<dbReference type="GO" id="GO:0015979">
    <property type="term" value="P:photosynthesis"/>
    <property type="evidence" value="ECO:0007669"/>
    <property type="project" value="UniProtKB-UniRule"/>
</dbReference>
<dbReference type="HAMAP" id="MF_00441">
    <property type="entry name" value="PSII_PsbK"/>
    <property type="match status" value="1"/>
</dbReference>
<dbReference type="InterPro" id="IPR003687">
    <property type="entry name" value="PSII_PsbK"/>
</dbReference>
<dbReference type="InterPro" id="IPR037270">
    <property type="entry name" value="PSII_PsbK_sf"/>
</dbReference>
<dbReference type="NCBIfam" id="NF002715">
    <property type="entry name" value="PRK02553.1"/>
    <property type="match status" value="1"/>
</dbReference>
<dbReference type="PANTHER" id="PTHR35325">
    <property type="match status" value="1"/>
</dbReference>
<dbReference type="PANTHER" id="PTHR35325:SF1">
    <property type="entry name" value="PHOTOSYSTEM II REACTION CENTER PROTEIN K"/>
    <property type="match status" value="1"/>
</dbReference>
<dbReference type="Pfam" id="PF02533">
    <property type="entry name" value="PsbK"/>
    <property type="match status" value="1"/>
</dbReference>
<dbReference type="SUPFAM" id="SSF161037">
    <property type="entry name" value="Photosystem II reaction center protein K, PsbK"/>
    <property type="match status" value="1"/>
</dbReference>
<name>PSBK_MARPO</name>
<geneLocation type="chloroplast"/>